<reference key="1">
    <citation type="submission" date="2006-11" db="EMBL/GenBank/DDBJ databases">
        <title>Identification and characterization of a new conjugation/ type IVA secretion system (trb/tra) of L. pneumophila Corby localized on a mobile genomic island.</title>
        <authorList>
            <person name="Gloeckner G."/>
            <person name="Albert-Weissenberger C."/>
            <person name="Weinmann E."/>
            <person name="Jacobi S."/>
            <person name="Schunder E."/>
            <person name="Steinert M."/>
            <person name="Buchrieser C."/>
            <person name="Hacker J."/>
            <person name="Heuner K."/>
        </authorList>
    </citation>
    <scope>NUCLEOTIDE SEQUENCE [LARGE SCALE GENOMIC DNA]</scope>
    <source>
        <strain>Corby</strain>
    </source>
</reference>
<protein>
    <recommendedName>
        <fullName evidence="1">Probable glycine dehydrogenase (decarboxylating) subunit 2</fullName>
        <ecNumber evidence="1">1.4.4.2</ecNumber>
    </recommendedName>
    <alternativeName>
        <fullName evidence="1">Glycine cleavage system P-protein subunit 2</fullName>
    </alternativeName>
    <alternativeName>
        <fullName evidence="1">Glycine decarboxylase subunit 2</fullName>
    </alternativeName>
    <alternativeName>
        <fullName evidence="1">Glycine dehydrogenase (aminomethyl-transferring) subunit 2</fullName>
    </alternativeName>
</protein>
<evidence type="ECO:0000255" key="1">
    <source>
        <dbReference type="HAMAP-Rule" id="MF_00713"/>
    </source>
</evidence>
<organism>
    <name type="scientific">Legionella pneumophila (strain Corby)</name>
    <dbReference type="NCBI Taxonomy" id="400673"/>
    <lineage>
        <taxon>Bacteria</taxon>
        <taxon>Pseudomonadati</taxon>
        <taxon>Pseudomonadota</taxon>
        <taxon>Gammaproteobacteria</taxon>
        <taxon>Legionellales</taxon>
        <taxon>Legionellaceae</taxon>
        <taxon>Legionella</taxon>
    </lineage>
</organism>
<name>GCSPB_LEGPC</name>
<proteinExistence type="inferred from homology"/>
<keyword id="KW-0560">Oxidoreductase</keyword>
<keyword id="KW-0663">Pyridoxal phosphate</keyword>
<feature type="chain" id="PRO_1000045694" description="Probable glycine dehydrogenase (decarboxylating) subunit 2">
    <location>
        <begin position="1"/>
        <end position="484"/>
    </location>
</feature>
<feature type="modified residue" description="N6-(pyridoxal phosphate)lysine" evidence="1">
    <location>
        <position position="264"/>
    </location>
</feature>
<sequence length="484" mass="53367">MLIFELSKTGRQAKAQIPRAVGKNYSIPEEFQRKSPPRLPACSELQVVRHFTCLSQKNFSIDTNFYPLGSCTMKYNPRGVHKAASLPGFINRHPLAMDNESQGFLETLYKLQNYISEITGMPGVSLTPMAGSQGEFAGVAMIKAYHQSRGDTARDEILIPDAAHGTNPASAVMCGFKVVEIATAPDGDIDLDELKRKVGPRTAGIMLTNPSTLGLFMRQIKEIASLVHQAGGLLYYDGANLNAILGKVRPGDMGFDVMHLNLHKTFATPHGGGGPGAGPVAVGKRLIPYMPLPVVKKTDSGYHWATRQDYPQSIGRLSCFMGNAGILLRAYFYMLVLGKEGLLRVSEFATLNANYLLKELTKVGYTAAYPDRRASHEFILTLNSEKKNYDVTAMDFAKRLLDYGVHAPTTYFPLLVPECLLIEPPETESKEELDAFVAVMKTIREEASKQPDILKTAPHTLPVKRLDDVKAARELDLNYFATHE</sequence>
<accession>A5I9T3</accession>
<dbReference type="EC" id="1.4.4.2" evidence="1"/>
<dbReference type="EMBL" id="CP000675">
    <property type="protein sequence ID" value="ABQ54133.1"/>
    <property type="molecule type" value="Genomic_DNA"/>
</dbReference>
<dbReference type="RefSeq" id="WP_011945314.1">
    <property type="nucleotide sequence ID" value="NZ_JAPMSS010000003.1"/>
</dbReference>
<dbReference type="SMR" id="A5I9T3"/>
<dbReference type="KEGG" id="lpc:LPC_0134"/>
<dbReference type="HOGENOM" id="CLU_004620_5_0_6"/>
<dbReference type="GO" id="GO:0005829">
    <property type="term" value="C:cytosol"/>
    <property type="evidence" value="ECO:0007669"/>
    <property type="project" value="TreeGrafter"/>
</dbReference>
<dbReference type="GO" id="GO:0005960">
    <property type="term" value="C:glycine cleavage complex"/>
    <property type="evidence" value="ECO:0007669"/>
    <property type="project" value="TreeGrafter"/>
</dbReference>
<dbReference type="GO" id="GO:0016594">
    <property type="term" value="F:glycine binding"/>
    <property type="evidence" value="ECO:0007669"/>
    <property type="project" value="TreeGrafter"/>
</dbReference>
<dbReference type="GO" id="GO:0004375">
    <property type="term" value="F:glycine dehydrogenase (decarboxylating) activity"/>
    <property type="evidence" value="ECO:0007669"/>
    <property type="project" value="UniProtKB-EC"/>
</dbReference>
<dbReference type="GO" id="GO:0030170">
    <property type="term" value="F:pyridoxal phosphate binding"/>
    <property type="evidence" value="ECO:0007669"/>
    <property type="project" value="TreeGrafter"/>
</dbReference>
<dbReference type="GO" id="GO:0019464">
    <property type="term" value="P:glycine decarboxylation via glycine cleavage system"/>
    <property type="evidence" value="ECO:0007669"/>
    <property type="project" value="UniProtKB-UniRule"/>
</dbReference>
<dbReference type="FunFam" id="3.40.640.10:FF:000224">
    <property type="entry name" value="Probable glycine dehydrogenase (decarboxylating) subunit 2"/>
    <property type="match status" value="1"/>
</dbReference>
<dbReference type="FunFam" id="3.90.1150.10:FF:000014">
    <property type="entry name" value="Probable glycine dehydrogenase (decarboxylating) subunit 2"/>
    <property type="match status" value="1"/>
</dbReference>
<dbReference type="Gene3D" id="6.20.440.10">
    <property type="match status" value="1"/>
</dbReference>
<dbReference type="Gene3D" id="3.90.1150.10">
    <property type="entry name" value="Aspartate Aminotransferase, domain 1"/>
    <property type="match status" value="1"/>
</dbReference>
<dbReference type="Gene3D" id="3.40.640.10">
    <property type="entry name" value="Type I PLP-dependent aspartate aminotransferase-like (Major domain)"/>
    <property type="match status" value="1"/>
</dbReference>
<dbReference type="HAMAP" id="MF_00713">
    <property type="entry name" value="GcvPB"/>
    <property type="match status" value="1"/>
</dbReference>
<dbReference type="InterPro" id="IPR000192">
    <property type="entry name" value="Aminotrans_V_dom"/>
</dbReference>
<dbReference type="InterPro" id="IPR023012">
    <property type="entry name" value="GcvPB"/>
</dbReference>
<dbReference type="InterPro" id="IPR049316">
    <property type="entry name" value="GDC-P_C"/>
</dbReference>
<dbReference type="InterPro" id="IPR020581">
    <property type="entry name" value="GDC_P"/>
</dbReference>
<dbReference type="InterPro" id="IPR015424">
    <property type="entry name" value="PyrdxlP-dep_Trfase"/>
</dbReference>
<dbReference type="InterPro" id="IPR015421">
    <property type="entry name" value="PyrdxlP-dep_Trfase_major"/>
</dbReference>
<dbReference type="InterPro" id="IPR015422">
    <property type="entry name" value="PyrdxlP-dep_Trfase_small"/>
</dbReference>
<dbReference type="NCBIfam" id="NF003346">
    <property type="entry name" value="PRK04366.1"/>
    <property type="match status" value="1"/>
</dbReference>
<dbReference type="PANTHER" id="PTHR11773:SF1">
    <property type="entry name" value="GLYCINE DEHYDROGENASE (DECARBOXYLATING), MITOCHONDRIAL"/>
    <property type="match status" value="1"/>
</dbReference>
<dbReference type="PANTHER" id="PTHR11773">
    <property type="entry name" value="GLYCINE DEHYDROGENASE, DECARBOXYLATING"/>
    <property type="match status" value="1"/>
</dbReference>
<dbReference type="Pfam" id="PF00266">
    <property type="entry name" value="Aminotran_5"/>
    <property type="match status" value="1"/>
</dbReference>
<dbReference type="Pfam" id="PF21478">
    <property type="entry name" value="GcvP2_C"/>
    <property type="match status" value="1"/>
</dbReference>
<dbReference type="SUPFAM" id="SSF53383">
    <property type="entry name" value="PLP-dependent transferases"/>
    <property type="match status" value="1"/>
</dbReference>
<comment type="function">
    <text evidence="1">The glycine cleavage system catalyzes the degradation of glycine. The P protein binds the alpha-amino group of glycine through its pyridoxal phosphate cofactor; CO(2) is released and the remaining methylamine moiety is then transferred to the lipoamide cofactor of the H protein.</text>
</comment>
<comment type="catalytic activity">
    <reaction evidence="1">
        <text>N(6)-[(R)-lipoyl]-L-lysyl-[glycine-cleavage complex H protein] + glycine + H(+) = N(6)-[(R)-S(8)-aminomethyldihydrolipoyl]-L-lysyl-[glycine-cleavage complex H protein] + CO2</text>
        <dbReference type="Rhea" id="RHEA:24304"/>
        <dbReference type="Rhea" id="RHEA-COMP:10494"/>
        <dbReference type="Rhea" id="RHEA-COMP:10495"/>
        <dbReference type="ChEBI" id="CHEBI:15378"/>
        <dbReference type="ChEBI" id="CHEBI:16526"/>
        <dbReference type="ChEBI" id="CHEBI:57305"/>
        <dbReference type="ChEBI" id="CHEBI:83099"/>
        <dbReference type="ChEBI" id="CHEBI:83143"/>
        <dbReference type="EC" id="1.4.4.2"/>
    </reaction>
</comment>
<comment type="cofactor">
    <cofactor evidence="1">
        <name>pyridoxal 5'-phosphate</name>
        <dbReference type="ChEBI" id="CHEBI:597326"/>
    </cofactor>
</comment>
<comment type="subunit">
    <text evidence="1">The glycine cleavage system is composed of four proteins: P, T, L and H. In this organism, the P 'protein' is a heterodimer of two subunits.</text>
</comment>
<comment type="similarity">
    <text evidence="1">Belongs to the GcvP family. C-terminal subunit subfamily.</text>
</comment>
<gene>
    <name evidence="1" type="primary">gcvPB</name>
    <name type="ordered locus">LPC_0134</name>
</gene>